<gene>
    <name evidence="1" type="primary">gpsA</name>
</gene>
<reference key="1">
    <citation type="journal article" date="2003" name="J. Bacteriol.">
        <title>The SecB chaperone is bifunctional in Serratia marcescens: SecB is involved in the Sec pathway and required for HasA secretion by the ABC transporter.</title>
        <authorList>
            <person name="Sapriel G."/>
            <person name="Wandersman C."/>
            <person name="Delepelaire P."/>
        </authorList>
    </citation>
    <scope>NUCLEOTIDE SEQUENCE [GENOMIC DNA]</scope>
</reference>
<comment type="function">
    <text evidence="1">Catalyzes the reduction of the glycolytic intermediate dihydroxyacetone phosphate (DHAP) to sn-glycerol 3-phosphate (G3P), the key precursor for phospholipid synthesis.</text>
</comment>
<comment type="catalytic activity">
    <reaction evidence="1">
        <text>sn-glycerol 3-phosphate + NAD(+) = dihydroxyacetone phosphate + NADH + H(+)</text>
        <dbReference type="Rhea" id="RHEA:11092"/>
        <dbReference type="ChEBI" id="CHEBI:15378"/>
        <dbReference type="ChEBI" id="CHEBI:57540"/>
        <dbReference type="ChEBI" id="CHEBI:57597"/>
        <dbReference type="ChEBI" id="CHEBI:57642"/>
        <dbReference type="ChEBI" id="CHEBI:57945"/>
        <dbReference type="EC" id="1.1.1.94"/>
    </reaction>
    <physiologicalReaction direction="right-to-left" evidence="1">
        <dbReference type="Rhea" id="RHEA:11094"/>
    </physiologicalReaction>
</comment>
<comment type="catalytic activity">
    <reaction evidence="1">
        <text>sn-glycerol 3-phosphate + NADP(+) = dihydroxyacetone phosphate + NADPH + H(+)</text>
        <dbReference type="Rhea" id="RHEA:11096"/>
        <dbReference type="ChEBI" id="CHEBI:15378"/>
        <dbReference type="ChEBI" id="CHEBI:57597"/>
        <dbReference type="ChEBI" id="CHEBI:57642"/>
        <dbReference type="ChEBI" id="CHEBI:57783"/>
        <dbReference type="ChEBI" id="CHEBI:58349"/>
        <dbReference type="EC" id="1.1.1.94"/>
    </reaction>
    <physiologicalReaction direction="right-to-left" evidence="1">
        <dbReference type="Rhea" id="RHEA:11098"/>
    </physiologicalReaction>
</comment>
<comment type="pathway">
    <text evidence="1">Membrane lipid metabolism; glycerophospholipid metabolism.</text>
</comment>
<comment type="subcellular location">
    <subcellularLocation>
        <location evidence="1">Cytoplasm</location>
    </subcellularLocation>
</comment>
<comment type="similarity">
    <text evidence="1">Belongs to the NAD-dependent glycerol-3-phosphate dehydrogenase family.</text>
</comment>
<name>GPDA_SERMA</name>
<protein>
    <recommendedName>
        <fullName evidence="1">Glycerol-3-phosphate dehydrogenase [NAD(P)+]</fullName>
        <ecNumber evidence="1">1.1.1.94</ecNumber>
    </recommendedName>
    <alternativeName>
        <fullName evidence="1">NAD(P)(+)-dependent glycerol-3-phosphate dehydrogenase</fullName>
    </alternativeName>
    <alternativeName>
        <fullName evidence="1">NAD(P)H-dependent dihydroxyacetone-phosphate reductase</fullName>
    </alternativeName>
</protein>
<feature type="chain" id="PRO_0000138020" description="Glycerol-3-phosphate dehydrogenase [NAD(P)+]">
    <location>
        <begin position="1"/>
        <end position="340"/>
    </location>
</feature>
<feature type="active site" description="Proton acceptor" evidence="1">
    <location>
        <position position="196"/>
    </location>
</feature>
<feature type="binding site" evidence="1">
    <location>
        <position position="15"/>
    </location>
    <ligand>
        <name>NADPH</name>
        <dbReference type="ChEBI" id="CHEBI:57783"/>
    </ligand>
</feature>
<feature type="binding site" evidence="1">
    <location>
        <position position="16"/>
    </location>
    <ligand>
        <name>NADPH</name>
        <dbReference type="ChEBI" id="CHEBI:57783"/>
    </ligand>
</feature>
<feature type="binding site" evidence="1">
    <location>
        <position position="36"/>
    </location>
    <ligand>
        <name>NADPH</name>
        <dbReference type="ChEBI" id="CHEBI:57783"/>
    </ligand>
</feature>
<feature type="binding site" evidence="1">
    <location>
        <position position="110"/>
    </location>
    <ligand>
        <name>NADPH</name>
        <dbReference type="ChEBI" id="CHEBI:57783"/>
    </ligand>
</feature>
<feature type="binding site" evidence="1">
    <location>
        <position position="110"/>
    </location>
    <ligand>
        <name>sn-glycerol 3-phosphate</name>
        <dbReference type="ChEBI" id="CHEBI:57597"/>
    </ligand>
</feature>
<feature type="binding site" evidence="1">
    <location>
        <position position="139"/>
    </location>
    <ligand>
        <name>sn-glycerol 3-phosphate</name>
        <dbReference type="ChEBI" id="CHEBI:57597"/>
    </ligand>
</feature>
<feature type="binding site" evidence="1">
    <location>
        <position position="141"/>
    </location>
    <ligand>
        <name>sn-glycerol 3-phosphate</name>
        <dbReference type="ChEBI" id="CHEBI:57597"/>
    </ligand>
</feature>
<feature type="binding site" evidence="1">
    <location>
        <position position="143"/>
    </location>
    <ligand>
        <name>NADPH</name>
        <dbReference type="ChEBI" id="CHEBI:57783"/>
    </ligand>
</feature>
<feature type="binding site" evidence="1">
    <location>
        <position position="196"/>
    </location>
    <ligand>
        <name>sn-glycerol 3-phosphate</name>
        <dbReference type="ChEBI" id="CHEBI:57597"/>
    </ligand>
</feature>
<feature type="binding site" evidence="1">
    <location>
        <position position="249"/>
    </location>
    <ligand>
        <name>sn-glycerol 3-phosphate</name>
        <dbReference type="ChEBI" id="CHEBI:57597"/>
    </ligand>
</feature>
<feature type="binding site" evidence="1">
    <location>
        <position position="259"/>
    </location>
    <ligand>
        <name>sn-glycerol 3-phosphate</name>
        <dbReference type="ChEBI" id="CHEBI:57597"/>
    </ligand>
</feature>
<feature type="binding site" evidence="1">
    <location>
        <position position="260"/>
    </location>
    <ligand>
        <name>NADPH</name>
        <dbReference type="ChEBI" id="CHEBI:57783"/>
    </ligand>
</feature>
<feature type="binding site" evidence="1">
    <location>
        <position position="260"/>
    </location>
    <ligand>
        <name>sn-glycerol 3-phosphate</name>
        <dbReference type="ChEBI" id="CHEBI:57597"/>
    </ligand>
</feature>
<feature type="binding site" evidence="1">
    <location>
        <position position="261"/>
    </location>
    <ligand>
        <name>sn-glycerol 3-phosphate</name>
        <dbReference type="ChEBI" id="CHEBI:57597"/>
    </ligand>
</feature>
<feature type="binding site" evidence="1">
    <location>
        <position position="284"/>
    </location>
    <ligand>
        <name>NADPH</name>
        <dbReference type="ChEBI" id="CHEBI:57783"/>
    </ligand>
</feature>
<feature type="binding site" evidence="1">
    <location>
        <position position="286"/>
    </location>
    <ligand>
        <name>NADPH</name>
        <dbReference type="ChEBI" id="CHEBI:57783"/>
    </ligand>
</feature>
<sequence>MNTVNASMTVIGAGSYGTALAITLARNGHSVVLWGHNPAQIQTLQHDRCNQAFLPDVPFPDTLLLEADLARALAASRDVLVVVPSHVFGDVLRQLKPHLRPDARIVWATKGLEAETGRLLQNVAREALGETIPLAVLSGPTFAKELAAGLPTAIALAATDAQFADDLQQGCMHCGKSFRVYSNPDFIGVQLGGAVKNVIAIGAGMSDGIGFGANARTALITRGLAEMSRLGSALGADPSTFMGMAGLGDLVLTCTDNQSRNRRFGIMLGQGKGVQEAQDSIGQVVEGYRNTKEVLALAQRQGVEMPITEQIYQVLYCHKDAREAALSLLGRARKDEKPSV</sequence>
<evidence type="ECO:0000255" key="1">
    <source>
        <dbReference type="HAMAP-Rule" id="MF_00394"/>
    </source>
</evidence>
<accession>Q8KRM1</accession>
<keyword id="KW-0963">Cytoplasm</keyword>
<keyword id="KW-0444">Lipid biosynthesis</keyword>
<keyword id="KW-0443">Lipid metabolism</keyword>
<keyword id="KW-0520">NAD</keyword>
<keyword id="KW-0521">NADP</keyword>
<keyword id="KW-0547">Nucleotide-binding</keyword>
<keyword id="KW-0560">Oxidoreductase</keyword>
<keyword id="KW-0594">Phospholipid biosynthesis</keyword>
<keyword id="KW-1208">Phospholipid metabolism</keyword>
<dbReference type="EC" id="1.1.1.94" evidence="1"/>
<dbReference type="EMBL" id="AF528189">
    <property type="protein sequence ID" value="AAM89274.1"/>
    <property type="molecule type" value="Genomic_DNA"/>
</dbReference>
<dbReference type="SMR" id="Q8KRM1"/>
<dbReference type="STRING" id="273526.SMDB11_4040"/>
<dbReference type="UniPathway" id="UPA00940"/>
<dbReference type="GO" id="GO:0005829">
    <property type="term" value="C:cytosol"/>
    <property type="evidence" value="ECO:0007669"/>
    <property type="project" value="TreeGrafter"/>
</dbReference>
<dbReference type="GO" id="GO:0047952">
    <property type="term" value="F:glycerol-3-phosphate dehydrogenase [NAD(P)+] activity"/>
    <property type="evidence" value="ECO:0007669"/>
    <property type="project" value="UniProtKB-UniRule"/>
</dbReference>
<dbReference type="GO" id="GO:0051287">
    <property type="term" value="F:NAD binding"/>
    <property type="evidence" value="ECO:0007669"/>
    <property type="project" value="InterPro"/>
</dbReference>
<dbReference type="GO" id="GO:0005975">
    <property type="term" value="P:carbohydrate metabolic process"/>
    <property type="evidence" value="ECO:0007669"/>
    <property type="project" value="InterPro"/>
</dbReference>
<dbReference type="GO" id="GO:0046167">
    <property type="term" value="P:glycerol-3-phosphate biosynthetic process"/>
    <property type="evidence" value="ECO:0007669"/>
    <property type="project" value="UniProtKB-UniRule"/>
</dbReference>
<dbReference type="GO" id="GO:0046168">
    <property type="term" value="P:glycerol-3-phosphate catabolic process"/>
    <property type="evidence" value="ECO:0007669"/>
    <property type="project" value="InterPro"/>
</dbReference>
<dbReference type="GO" id="GO:0046474">
    <property type="term" value="P:glycerophospholipid biosynthetic process"/>
    <property type="evidence" value="ECO:0007669"/>
    <property type="project" value="TreeGrafter"/>
</dbReference>
<dbReference type="FunFam" id="1.10.1040.10:FF:000001">
    <property type="entry name" value="Glycerol-3-phosphate dehydrogenase [NAD(P)+]"/>
    <property type="match status" value="1"/>
</dbReference>
<dbReference type="FunFam" id="3.40.50.720:FF:000019">
    <property type="entry name" value="Glycerol-3-phosphate dehydrogenase [NAD(P)+]"/>
    <property type="match status" value="1"/>
</dbReference>
<dbReference type="Gene3D" id="1.10.1040.10">
    <property type="entry name" value="N-(1-d-carboxylethyl)-l-norvaline Dehydrogenase, domain 2"/>
    <property type="match status" value="1"/>
</dbReference>
<dbReference type="Gene3D" id="3.40.50.720">
    <property type="entry name" value="NAD(P)-binding Rossmann-like Domain"/>
    <property type="match status" value="1"/>
</dbReference>
<dbReference type="HAMAP" id="MF_00394">
    <property type="entry name" value="NAD_Glyc3P_dehydrog"/>
    <property type="match status" value="1"/>
</dbReference>
<dbReference type="InterPro" id="IPR008927">
    <property type="entry name" value="6-PGluconate_DH-like_C_sf"/>
</dbReference>
<dbReference type="InterPro" id="IPR013328">
    <property type="entry name" value="6PGD_dom2"/>
</dbReference>
<dbReference type="InterPro" id="IPR006168">
    <property type="entry name" value="G3P_DH_NAD-dep"/>
</dbReference>
<dbReference type="InterPro" id="IPR006109">
    <property type="entry name" value="G3P_DH_NAD-dep_C"/>
</dbReference>
<dbReference type="InterPro" id="IPR011128">
    <property type="entry name" value="G3P_DH_NAD-dep_N"/>
</dbReference>
<dbReference type="InterPro" id="IPR036291">
    <property type="entry name" value="NAD(P)-bd_dom_sf"/>
</dbReference>
<dbReference type="NCBIfam" id="NF000939">
    <property type="entry name" value="PRK00094.1-1"/>
    <property type="match status" value="1"/>
</dbReference>
<dbReference type="NCBIfam" id="NF000940">
    <property type="entry name" value="PRK00094.1-2"/>
    <property type="match status" value="1"/>
</dbReference>
<dbReference type="NCBIfam" id="NF000942">
    <property type="entry name" value="PRK00094.1-4"/>
    <property type="match status" value="1"/>
</dbReference>
<dbReference type="PANTHER" id="PTHR11728">
    <property type="entry name" value="GLYCEROL-3-PHOSPHATE DEHYDROGENASE"/>
    <property type="match status" value="1"/>
</dbReference>
<dbReference type="PANTHER" id="PTHR11728:SF1">
    <property type="entry name" value="GLYCEROL-3-PHOSPHATE DEHYDROGENASE [NAD(+)] 2, CHLOROPLASTIC"/>
    <property type="match status" value="1"/>
</dbReference>
<dbReference type="Pfam" id="PF07479">
    <property type="entry name" value="NAD_Gly3P_dh_C"/>
    <property type="match status" value="1"/>
</dbReference>
<dbReference type="Pfam" id="PF01210">
    <property type="entry name" value="NAD_Gly3P_dh_N"/>
    <property type="match status" value="1"/>
</dbReference>
<dbReference type="PIRSF" id="PIRSF000114">
    <property type="entry name" value="Glycerol-3-P_dh"/>
    <property type="match status" value="1"/>
</dbReference>
<dbReference type="PRINTS" id="PR00077">
    <property type="entry name" value="GPDHDRGNASE"/>
</dbReference>
<dbReference type="SUPFAM" id="SSF48179">
    <property type="entry name" value="6-phosphogluconate dehydrogenase C-terminal domain-like"/>
    <property type="match status" value="1"/>
</dbReference>
<dbReference type="SUPFAM" id="SSF51735">
    <property type="entry name" value="NAD(P)-binding Rossmann-fold domains"/>
    <property type="match status" value="1"/>
</dbReference>
<dbReference type="PROSITE" id="PS00957">
    <property type="entry name" value="NAD_G3PDH"/>
    <property type="match status" value="1"/>
</dbReference>
<organism>
    <name type="scientific">Serratia marcescens</name>
    <dbReference type="NCBI Taxonomy" id="615"/>
    <lineage>
        <taxon>Bacteria</taxon>
        <taxon>Pseudomonadati</taxon>
        <taxon>Pseudomonadota</taxon>
        <taxon>Gammaproteobacteria</taxon>
        <taxon>Enterobacterales</taxon>
        <taxon>Yersiniaceae</taxon>
        <taxon>Serratia</taxon>
    </lineage>
</organism>
<proteinExistence type="inferred from homology"/>